<protein>
    <recommendedName>
        <fullName>Transmembrane protein 65</fullName>
    </recommendedName>
</protein>
<proteinExistence type="evidence at transcript level"/>
<comment type="function">
    <text evidence="1 2">Essential for maintaining proper cardiac intercalated disk (ICD) structure and function as well as cardiac conduction velocity in the heart. Its association with SCN1B is required for stabilizing the perinexus in the ICD and for localization of GJA1 and SCN5A to the ICD. May regulate the function of the gap junction protein GJA1 and may contribute to the stability and proper localization of GJA1 to cardiac intercalated disk thereby regulating gap junction communication (By similarity). Regulates mitochondrial respiration and mitochondrial DNA copy number maintenance (By similarity).</text>
</comment>
<comment type="subunit">
    <text evidence="1">Monomer. Homodimer. Interacts with GJA1. Interacts weakly with DSP. Interacts with SCN1B.</text>
</comment>
<comment type="subcellular location">
    <subcellularLocation>
        <location evidence="1">Cell membrane</location>
        <topology evidence="3">Multi-pass membrane protein</topology>
    </subcellularLocation>
    <subcellularLocation>
        <location evidence="2">Mitochondrion inner membrane</location>
        <topology evidence="3">Multi-pass membrane protein</topology>
    </subcellularLocation>
    <text evidence="1">Localizes at the intercalated disk in ventricular tissue and cardiomyocytes.</text>
</comment>
<name>TMM65_BOVIN</name>
<feature type="transit peptide" description="Mitochondrion" evidence="3">
    <location>
        <begin position="1"/>
        <end position="57"/>
    </location>
</feature>
<feature type="chain" id="PRO_0000251403" description="Transmembrane protein 65">
    <location>
        <begin position="58"/>
        <end position="236"/>
    </location>
</feature>
<feature type="topological domain" description="Cytoplasmic" evidence="2">
    <location>
        <begin position="58"/>
        <end position="106"/>
    </location>
</feature>
<feature type="transmembrane region" description="Helical" evidence="3">
    <location>
        <begin position="107"/>
        <end position="127"/>
    </location>
</feature>
<feature type="topological domain" description="Extracellular" evidence="2">
    <location>
        <begin position="128"/>
        <end position="138"/>
    </location>
</feature>
<feature type="transmembrane region" description="Helical" evidence="3">
    <location>
        <begin position="139"/>
        <end position="161"/>
    </location>
</feature>
<feature type="topological domain" description="Cytoplasmic" evidence="2">
    <location>
        <begin position="162"/>
        <end position="205"/>
    </location>
</feature>
<feature type="transmembrane region" description="Helical" evidence="3">
    <location>
        <begin position="206"/>
        <end position="226"/>
    </location>
</feature>
<feature type="topological domain" description="Extracellular" evidence="2">
    <location>
        <begin position="227"/>
        <end position="236"/>
    </location>
</feature>
<evidence type="ECO:0000250" key="1">
    <source>
        <dbReference type="UniProtKB" id="Q4VAE3"/>
    </source>
</evidence>
<evidence type="ECO:0000250" key="2">
    <source>
        <dbReference type="UniProtKB" id="Q6PI78"/>
    </source>
</evidence>
<evidence type="ECO:0000255" key="3"/>
<accession>Q0VCH8</accession>
<organism>
    <name type="scientific">Bos taurus</name>
    <name type="common">Bovine</name>
    <dbReference type="NCBI Taxonomy" id="9913"/>
    <lineage>
        <taxon>Eukaryota</taxon>
        <taxon>Metazoa</taxon>
        <taxon>Chordata</taxon>
        <taxon>Craniata</taxon>
        <taxon>Vertebrata</taxon>
        <taxon>Euteleostomi</taxon>
        <taxon>Mammalia</taxon>
        <taxon>Eutheria</taxon>
        <taxon>Laurasiatheria</taxon>
        <taxon>Artiodactyla</taxon>
        <taxon>Ruminantia</taxon>
        <taxon>Pecora</taxon>
        <taxon>Bovidae</taxon>
        <taxon>Bovinae</taxon>
        <taxon>Bos</taxon>
    </lineage>
</organism>
<reference key="1">
    <citation type="submission" date="2006-08" db="EMBL/GenBank/DDBJ databases">
        <authorList>
            <consortium name="NIH - Mammalian Gene Collection (MGC) project"/>
        </authorList>
    </citation>
    <scope>NUCLEOTIDE SEQUENCE [LARGE SCALE MRNA]</scope>
    <source>
        <strain>Hereford</strain>
        <tissue>Placenta</tissue>
    </source>
</reference>
<gene>
    <name type="primary">TMEM65</name>
</gene>
<sequence>MSRLLPLLRSRTARSLRPGPAAAAAPRPPSWCCCGRGLLALAAPGGPRALGTHPKKEPIEALNTAQGARDFIYSLHSSERSCLLKELHRFESIAIAQEKLEAQPPTPGQLRYVFIHNAIPFIGFGFLDNAIMIVAGTHIELSIGIILGISTMAAAALGNLVSDLAGLGLAGYVEALASRLGLSIPDLSPKQVDMWQTRVSSHLGKAVGVTIGCILGMFPLIFFGGGEDDEKLEKKN</sequence>
<keyword id="KW-1003">Cell membrane</keyword>
<keyword id="KW-0472">Membrane</keyword>
<keyword id="KW-0496">Mitochondrion</keyword>
<keyword id="KW-0999">Mitochondrion inner membrane</keyword>
<keyword id="KW-1185">Reference proteome</keyword>
<keyword id="KW-0809">Transit peptide</keyword>
<keyword id="KW-0812">Transmembrane</keyword>
<keyword id="KW-1133">Transmembrane helix</keyword>
<dbReference type="EMBL" id="BC120160">
    <property type="protein sequence ID" value="AAI20161.1"/>
    <property type="molecule type" value="mRNA"/>
</dbReference>
<dbReference type="RefSeq" id="NP_001069786.1">
    <property type="nucleotide sequence ID" value="NM_001076318.1"/>
</dbReference>
<dbReference type="FunCoup" id="Q0VCH8">
    <property type="interactions" value="248"/>
</dbReference>
<dbReference type="STRING" id="9913.ENSBTAP00000029809"/>
<dbReference type="PaxDb" id="9913-ENSBTAP00000029809"/>
<dbReference type="Ensembl" id="ENSBTAT00000087846.1">
    <property type="protein sequence ID" value="ENSBTAP00000088805.1"/>
    <property type="gene ID" value="ENSBTAG00000022114.6"/>
</dbReference>
<dbReference type="GeneID" id="614243"/>
<dbReference type="KEGG" id="bta:614243"/>
<dbReference type="CTD" id="157378"/>
<dbReference type="VEuPathDB" id="HostDB:ENSBTAG00000022114"/>
<dbReference type="VGNC" id="VGNC:36106">
    <property type="gene designation" value="TMEM65"/>
</dbReference>
<dbReference type="eggNOG" id="KOG4619">
    <property type="taxonomic scope" value="Eukaryota"/>
</dbReference>
<dbReference type="GeneTree" id="ENSGT00390000017802"/>
<dbReference type="HOGENOM" id="CLU_075402_1_0_1"/>
<dbReference type="InParanoid" id="Q0VCH8"/>
<dbReference type="OMA" id="CNLGTHP"/>
<dbReference type="OrthoDB" id="430821at2759"/>
<dbReference type="TreeFam" id="TF105823"/>
<dbReference type="Proteomes" id="UP000009136">
    <property type="component" value="Chromosome 14"/>
</dbReference>
<dbReference type="Bgee" id="ENSBTAG00000022114">
    <property type="expression patterns" value="Expressed in rectus femoris and 108 other cell types or tissues"/>
</dbReference>
<dbReference type="GO" id="GO:0005743">
    <property type="term" value="C:mitochondrial inner membrane"/>
    <property type="evidence" value="ECO:0000250"/>
    <property type="project" value="UniProtKB"/>
</dbReference>
<dbReference type="GO" id="GO:0005739">
    <property type="term" value="C:mitochondrion"/>
    <property type="evidence" value="ECO:0000318"/>
    <property type="project" value="GO_Central"/>
</dbReference>
<dbReference type="GO" id="GO:0005886">
    <property type="term" value="C:plasma membrane"/>
    <property type="evidence" value="ECO:0007669"/>
    <property type="project" value="UniProtKB-SubCell"/>
</dbReference>
<dbReference type="GO" id="GO:0061337">
    <property type="term" value="P:cardiac conduction"/>
    <property type="evidence" value="ECO:0000250"/>
    <property type="project" value="UniProtKB"/>
</dbReference>
<dbReference type="GO" id="GO:0003231">
    <property type="term" value="P:cardiac ventricle development"/>
    <property type="evidence" value="ECO:0000318"/>
    <property type="project" value="GO_Central"/>
</dbReference>
<dbReference type="GO" id="GO:1903779">
    <property type="term" value="P:regulation of cardiac conduction"/>
    <property type="evidence" value="ECO:0000318"/>
    <property type="project" value="GO_Central"/>
</dbReference>
<dbReference type="InterPro" id="IPR019537">
    <property type="entry name" value="TMEM65"/>
</dbReference>
<dbReference type="PANTHER" id="PTHR21706">
    <property type="entry name" value="TRANSMEMBRANE PROTEIN 65"/>
    <property type="match status" value="1"/>
</dbReference>
<dbReference type="PANTHER" id="PTHR21706:SF15">
    <property type="entry name" value="TRANSMEMBRANE PROTEIN 65"/>
    <property type="match status" value="1"/>
</dbReference>
<dbReference type="Pfam" id="PF10507">
    <property type="entry name" value="TMEM65"/>
    <property type="match status" value="1"/>
</dbReference>